<organism>
    <name type="scientific">Guillardia theta</name>
    <name type="common">Cryptophyte</name>
    <name type="synonym">Cryptomonas phi</name>
    <dbReference type="NCBI Taxonomy" id="55529"/>
    <lineage>
        <taxon>Eukaryota</taxon>
        <taxon>Cryptophyceae</taxon>
        <taxon>Pyrenomonadales</taxon>
        <taxon>Geminigeraceae</taxon>
        <taxon>Guillardia</taxon>
    </lineage>
</organism>
<feature type="chain" id="PRO_0000207791" description="Photosystem I reaction center subunit IX">
    <location>
        <begin position="1"/>
        <end position="42"/>
    </location>
</feature>
<feature type="transmembrane region" description="Helical" evidence="1">
    <location>
        <begin position="8"/>
        <end position="28"/>
    </location>
</feature>
<proteinExistence type="inferred from homology"/>
<comment type="function">
    <text evidence="1">May help in the organization of the PsaE and PsaF subunits.</text>
</comment>
<comment type="subcellular location">
    <subcellularLocation>
        <location evidence="1">Plastid</location>
        <location evidence="1">Chloroplast thylakoid membrane</location>
        <topology evidence="1">Single-pass membrane protein</topology>
    </subcellularLocation>
</comment>
<comment type="similarity">
    <text evidence="1">Belongs to the PsaJ family.</text>
</comment>
<accession>O78456</accession>
<name>PSAJ_GUITH</name>
<geneLocation type="chloroplast"/>
<protein>
    <recommendedName>
        <fullName evidence="1">Photosystem I reaction center subunit IX</fullName>
    </recommendedName>
    <alternativeName>
        <fullName evidence="1">PSI-J</fullName>
    </alternativeName>
</protein>
<reference key="1">
    <citation type="journal article" date="1999" name="J. Mol. Evol.">
        <title>The plastid genome of the cryptophyte alga, Guillardia theta: complete sequence and conserved synteny groups confirm its common ancestry with red algae.</title>
        <authorList>
            <person name="Douglas S.E."/>
            <person name="Penny S.L."/>
        </authorList>
    </citation>
    <scope>NUCLEOTIDE SEQUENCE [LARGE SCALE GENOMIC DNA]</scope>
</reference>
<keyword id="KW-0150">Chloroplast</keyword>
<keyword id="KW-0472">Membrane</keyword>
<keyword id="KW-0602">Photosynthesis</keyword>
<keyword id="KW-0603">Photosystem I</keyword>
<keyword id="KW-0934">Plastid</keyword>
<keyword id="KW-0793">Thylakoid</keyword>
<keyword id="KW-0812">Transmembrane</keyword>
<keyword id="KW-1133">Transmembrane helix</keyword>
<dbReference type="EMBL" id="AF041468">
    <property type="protein sequence ID" value="AAC35647.1"/>
    <property type="molecule type" value="Genomic_DNA"/>
</dbReference>
<dbReference type="RefSeq" id="NP_050713.1">
    <property type="nucleotide sequence ID" value="NC_000926.1"/>
</dbReference>
<dbReference type="SMR" id="O78456"/>
<dbReference type="GeneID" id="857014"/>
<dbReference type="HOGENOM" id="CLU_212133_1_1_1"/>
<dbReference type="GO" id="GO:0009535">
    <property type="term" value="C:chloroplast thylakoid membrane"/>
    <property type="evidence" value="ECO:0007669"/>
    <property type="project" value="UniProtKB-SubCell"/>
</dbReference>
<dbReference type="GO" id="GO:0009522">
    <property type="term" value="C:photosystem I"/>
    <property type="evidence" value="ECO:0007669"/>
    <property type="project" value="UniProtKB-KW"/>
</dbReference>
<dbReference type="GO" id="GO:0015979">
    <property type="term" value="P:photosynthesis"/>
    <property type="evidence" value="ECO:0007669"/>
    <property type="project" value="UniProtKB-UniRule"/>
</dbReference>
<dbReference type="Gene3D" id="1.20.5.510">
    <property type="entry name" value="Single helix bin"/>
    <property type="match status" value="1"/>
</dbReference>
<dbReference type="HAMAP" id="MF_00522">
    <property type="entry name" value="PSI_PsaJ"/>
    <property type="match status" value="1"/>
</dbReference>
<dbReference type="InterPro" id="IPR002615">
    <property type="entry name" value="PSI_PsaJ"/>
</dbReference>
<dbReference type="InterPro" id="IPR036062">
    <property type="entry name" value="PSI_PsaJ_sf"/>
</dbReference>
<dbReference type="PANTHER" id="PTHR36082">
    <property type="match status" value="1"/>
</dbReference>
<dbReference type="PANTHER" id="PTHR36082:SF2">
    <property type="entry name" value="PHOTOSYSTEM I REACTION CENTER SUBUNIT IX"/>
    <property type="match status" value="1"/>
</dbReference>
<dbReference type="Pfam" id="PF01701">
    <property type="entry name" value="PSI_PsaJ"/>
    <property type="match status" value="1"/>
</dbReference>
<dbReference type="SUPFAM" id="SSF81544">
    <property type="entry name" value="Subunit IX of photosystem I reaction centre, PsaJ"/>
    <property type="match status" value="1"/>
</dbReference>
<sequence>MDNNFLKYLSTAPVLLTIWLSFTAALVIEANRFYPDMLYFPI</sequence>
<gene>
    <name evidence="1" type="primary">psaJ</name>
</gene>
<evidence type="ECO:0000255" key="1">
    <source>
        <dbReference type="HAMAP-Rule" id="MF_00522"/>
    </source>
</evidence>